<reference key="1">
    <citation type="journal article" date="2008" name="PLoS Genet.">
        <title>Complete genome sequence of the N2-fixing broad host range endophyte Klebsiella pneumoniae 342 and virulence predictions verified in mice.</title>
        <authorList>
            <person name="Fouts D.E."/>
            <person name="Tyler H.L."/>
            <person name="DeBoy R.T."/>
            <person name="Daugherty S."/>
            <person name="Ren Q."/>
            <person name="Badger J.H."/>
            <person name="Durkin A.S."/>
            <person name="Huot H."/>
            <person name="Shrivastava S."/>
            <person name="Kothari S."/>
            <person name="Dodson R.J."/>
            <person name="Mohamoud Y."/>
            <person name="Khouri H."/>
            <person name="Roesch L.F.W."/>
            <person name="Krogfelt K.A."/>
            <person name="Struve C."/>
            <person name="Triplett E.W."/>
            <person name="Methe B.A."/>
        </authorList>
    </citation>
    <scope>NUCLEOTIDE SEQUENCE [LARGE SCALE GENOMIC DNA]</scope>
    <source>
        <strain>342</strain>
    </source>
</reference>
<accession>B5Y1K9</accession>
<organism>
    <name type="scientific">Klebsiella pneumoniae (strain 342)</name>
    <dbReference type="NCBI Taxonomy" id="507522"/>
    <lineage>
        <taxon>Bacteria</taxon>
        <taxon>Pseudomonadati</taxon>
        <taxon>Pseudomonadota</taxon>
        <taxon>Gammaproteobacteria</taxon>
        <taxon>Enterobacterales</taxon>
        <taxon>Enterobacteriaceae</taxon>
        <taxon>Klebsiella/Raoultella group</taxon>
        <taxon>Klebsiella</taxon>
        <taxon>Klebsiella pneumoniae complex</taxon>
    </lineage>
</organism>
<protein>
    <recommendedName>
        <fullName evidence="1">Deoxyguanosinetriphosphate triphosphohydrolase</fullName>
        <shortName evidence="1">dGTP triphosphohydrolase</shortName>
        <shortName evidence="1">dGTPase</shortName>
        <ecNumber evidence="1">3.1.5.1</ecNumber>
    </recommendedName>
</protein>
<evidence type="ECO:0000255" key="1">
    <source>
        <dbReference type="HAMAP-Rule" id="MF_00030"/>
    </source>
</evidence>
<evidence type="ECO:0000255" key="2">
    <source>
        <dbReference type="PROSITE-ProRule" id="PRU01175"/>
    </source>
</evidence>
<name>DGTP_KLEP3</name>
<comment type="function">
    <text evidence="1">dGTPase preferentially hydrolyzes dGTP over the other canonical NTPs.</text>
</comment>
<comment type="catalytic activity">
    <reaction evidence="1">
        <text>dGTP + H2O = 2'-deoxyguanosine + triphosphate + H(+)</text>
        <dbReference type="Rhea" id="RHEA:15193"/>
        <dbReference type="ChEBI" id="CHEBI:15377"/>
        <dbReference type="ChEBI" id="CHEBI:15378"/>
        <dbReference type="ChEBI" id="CHEBI:17172"/>
        <dbReference type="ChEBI" id="CHEBI:18036"/>
        <dbReference type="ChEBI" id="CHEBI:61429"/>
        <dbReference type="EC" id="3.1.5.1"/>
    </reaction>
</comment>
<comment type="cofactor">
    <cofactor evidence="1">
        <name>Mg(2+)</name>
        <dbReference type="ChEBI" id="CHEBI:18420"/>
    </cofactor>
</comment>
<comment type="subunit">
    <text evidence="1">Homotetramer.</text>
</comment>
<comment type="similarity">
    <text evidence="1">Belongs to the dGTPase family. Type 1 subfamily.</text>
</comment>
<gene>
    <name evidence="1" type="primary">dgt</name>
    <name type="ordered locus">KPK_4558</name>
</gene>
<proteinExistence type="inferred from homology"/>
<keyword id="KW-0378">Hydrolase</keyword>
<keyword id="KW-0460">Magnesium</keyword>
<feature type="chain" id="PRO_1000116919" description="Deoxyguanosinetriphosphate triphosphohydrolase">
    <location>
        <begin position="1"/>
        <end position="504"/>
    </location>
</feature>
<feature type="domain" description="HD" evidence="2">
    <location>
        <begin position="66"/>
        <end position="273"/>
    </location>
</feature>
<sequence>MAKIDFRNKINWRRRFRSPPRVETERDILRIFESDRGRIVNSPAIRRLQQKTQVFPLERNAAVRTRLTHSLEVQQVGRYIAKEVLSRLKEQKLLEEYGLEELTGPFESVVEMACLMHDIGNPPFGHFGEAAINDWFRQRLAPGDALGQPLTDDRCEVQALRLHEGETALNALRRKVRQDLCSFEGNAQGIRLVHTLMRMNLTWAQVGCILKYTRPAWWFEATPASHSYLMKKPGYYLAEEEYVARLRKELDLAPYNRFPLTWIMEAADDISYCVADLEDAVEKRIFSAEQLYQHLYDAWGNHEKGSLFSQVVENAWEKSRANYLRQSAEDQFFMYLRVNTLNKLVPYAARRFIDNLPAIFTGDFNHALLEDDSDCSQLLELYKNVAMKQVFSHPDVEQLELQGYRVISGLLDIYQPLLKLSLEDFSELVAQERVRRLPIASRLYQKLSTRHRLAYVEAVNKLVRTAPEFALMEYYYRCRLIQDYISGMTDLYAWDEYRRLMAVE</sequence>
<dbReference type="EC" id="3.1.5.1" evidence="1"/>
<dbReference type="EMBL" id="CP000964">
    <property type="protein sequence ID" value="ACI10998.1"/>
    <property type="molecule type" value="Genomic_DNA"/>
</dbReference>
<dbReference type="SMR" id="B5Y1K9"/>
<dbReference type="KEGG" id="kpe:KPK_4558"/>
<dbReference type="HOGENOM" id="CLU_028163_2_1_6"/>
<dbReference type="Proteomes" id="UP000001734">
    <property type="component" value="Chromosome"/>
</dbReference>
<dbReference type="GO" id="GO:0008832">
    <property type="term" value="F:dGTPase activity"/>
    <property type="evidence" value="ECO:0007669"/>
    <property type="project" value="UniProtKB-UniRule"/>
</dbReference>
<dbReference type="GO" id="GO:0000287">
    <property type="term" value="F:magnesium ion binding"/>
    <property type="evidence" value="ECO:0007669"/>
    <property type="project" value="UniProtKB-UniRule"/>
</dbReference>
<dbReference type="GO" id="GO:0006203">
    <property type="term" value="P:dGTP catabolic process"/>
    <property type="evidence" value="ECO:0007669"/>
    <property type="project" value="InterPro"/>
</dbReference>
<dbReference type="CDD" id="cd00077">
    <property type="entry name" value="HDc"/>
    <property type="match status" value="1"/>
</dbReference>
<dbReference type="FunFam" id="1.10.3210.10:FF:000009">
    <property type="entry name" value="Deoxyguanosinetriphosphate triphosphohydrolase"/>
    <property type="match status" value="1"/>
</dbReference>
<dbReference type="FunFam" id="1.10.3210.10:FF:000010">
    <property type="entry name" value="Deoxyguanosinetriphosphate triphosphohydrolase"/>
    <property type="match status" value="1"/>
</dbReference>
<dbReference type="FunFam" id="1.10.3410.10:FF:000001">
    <property type="entry name" value="Deoxyguanosinetriphosphate triphosphohydrolase"/>
    <property type="match status" value="1"/>
</dbReference>
<dbReference type="Gene3D" id="1.10.3210.10">
    <property type="entry name" value="Hypothetical protein af1432"/>
    <property type="match status" value="2"/>
</dbReference>
<dbReference type="Gene3D" id="1.10.3410.10">
    <property type="entry name" value="putative deoxyguanosinetriphosphate triphosphohydrolase like domain"/>
    <property type="match status" value="1"/>
</dbReference>
<dbReference type="HAMAP" id="MF_00030">
    <property type="entry name" value="dGTPase_type1"/>
    <property type="match status" value="1"/>
</dbReference>
<dbReference type="InterPro" id="IPR023293">
    <property type="entry name" value="dGTP_triP_hydro_central_sf"/>
</dbReference>
<dbReference type="InterPro" id="IPR006261">
    <property type="entry name" value="dGTPase"/>
</dbReference>
<dbReference type="InterPro" id="IPR050135">
    <property type="entry name" value="dGTPase-like"/>
</dbReference>
<dbReference type="InterPro" id="IPR020779">
    <property type="entry name" value="dNTPase_1"/>
</dbReference>
<dbReference type="InterPro" id="IPR003607">
    <property type="entry name" value="HD/PDEase_dom"/>
</dbReference>
<dbReference type="InterPro" id="IPR006674">
    <property type="entry name" value="HD_domain"/>
</dbReference>
<dbReference type="InterPro" id="IPR026875">
    <property type="entry name" value="PHydrolase_assoc_dom"/>
</dbReference>
<dbReference type="NCBIfam" id="TIGR01353">
    <property type="entry name" value="dGTP_triPase"/>
    <property type="match status" value="1"/>
</dbReference>
<dbReference type="NCBIfam" id="NF003429">
    <property type="entry name" value="PRK04926.1"/>
    <property type="match status" value="1"/>
</dbReference>
<dbReference type="PANTHER" id="PTHR11373:SF32">
    <property type="entry name" value="DEOXYGUANOSINETRIPHOSPHATE TRIPHOSPHOHYDROLASE"/>
    <property type="match status" value="1"/>
</dbReference>
<dbReference type="PANTHER" id="PTHR11373">
    <property type="entry name" value="DEOXYNUCLEOSIDE TRIPHOSPHATE TRIPHOSPHOHYDROLASE"/>
    <property type="match status" value="1"/>
</dbReference>
<dbReference type="Pfam" id="PF01966">
    <property type="entry name" value="HD"/>
    <property type="match status" value="1"/>
</dbReference>
<dbReference type="Pfam" id="PF13286">
    <property type="entry name" value="HD_assoc"/>
    <property type="match status" value="1"/>
</dbReference>
<dbReference type="SMART" id="SM00471">
    <property type="entry name" value="HDc"/>
    <property type="match status" value="1"/>
</dbReference>
<dbReference type="SUPFAM" id="SSF109604">
    <property type="entry name" value="HD-domain/PDEase-like"/>
    <property type="match status" value="1"/>
</dbReference>
<dbReference type="PROSITE" id="PS51831">
    <property type="entry name" value="HD"/>
    <property type="match status" value="1"/>
</dbReference>